<evidence type="ECO:0000250" key="1"/>
<evidence type="ECO:0000255" key="2"/>
<evidence type="ECO:0000305" key="3"/>
<protein>
    <recommendedName>
        <fullName evidence="3">Neurotrophic factor BDNF precursor form</fullName>
        <shortName>proBDNF</shortName>
    </recommendedName>
    <alternativeName>
        <fullName>Brain-derived neurotrophic factor</fullName>
    </alternativeName>
    <component>
        <recommendedName>
            <fullName>Neurotrophic factor BDNF</fullName>
        </recommendedName>
    </component>
</protein>
<sequence>SCMKAAPMKEVSIRGQGSLAYPGLRTQGNLETLGGPNDATRGLTSLADTFEHVIEELLDEQQAIQPSKENKDADLYSTRVMLSSQVPLEPPLLFLLEEYKNYLDAANMSMRVRRHSDPARRGELSVCDSTSEWVTAAEKKTAVDMSGATVTVLEKVPVPKGQLKQYFYETKCSSKGYAKEGCRGIDKRYWNSQCRTTQSFVRALTMDNKKRVGWRFIRIDTSC</sequence>
<dbReference type="EMBL" id="AY988040">
    <property type="protein sequence ID" value="AAY44247.1"/>
    <property type="molecule type" value="Genomic_DNA"/>
</dbReference>
<dbReference type="SMR" id="Q1X6Z8"/>
<dbReference type="GlyCosmos" id="Q1X6Z8">
    <property type="glycosylation" value="1 site, No reported glycans"/>
</dbReference>
<dbReference type="GO" id="GO:0030424">
    <property type="term" value="C:axon"/>
    <property type="evidence" value="ECO:0007669"/>
    <property type="project" value="TreeGrafter"/>
</dbReference>
<dbReference type="GO" id="GO:0030425">
    <property type="term" value="C:dendrite"/>
    <property type="evidence" value="ECO:0007669"/>
    <property type="project" value="TreeGrafter"/>
</dbReference>
<dbReference type="GO" id="GO:0005615">
    <property type="term" value="C:extracellular space"/>
    <property type="evidence" value="ECO:0007669"/>
    <property type="project" value="TreeGrafter"/>
</dbReference>
<dbReference type="GO" id="GO:0008021">
    <property type="term" value="C:synaptic vesicle"/>
    <property type="evidence" value="ECO:0007669"/>
    <property type="project" value="TreeGrafter"/>
</dbReference>
<dbReference type="GO" id="GO:0008083">
    <property type="term" value="F:growth factor activity"/>
    <property type="evidence" value="ECO:0007669"/>
    <property type="project" value="UniProtKB-KW"/>
</dbReference>
<dbReference type="GO" id="GO:0005163">
    <property type="term" value="F:nerve growth factor receptor binding"/>
    <property type="evidence" value="ECO:0007669"/>
    <property type="project" value="TreeGrafter"/>
</dbReference>
<dbReference type="GO" id="GO:0007169">
    <property type="term" value="P:cell surface receptor protein tyrosine kinase signaling pathway"/>
    <property type="evidence" value="ECO:0007669"/>
    <property type="project" value="TreeGrafter"/>
</dbReference>
<dbReference type="GO" id="GO:0050804">
    <property type="term" value="P:modulation of chemical synaptic transmission"/>
    <property type="evidence" value="ECO:0007669"/>
    <property type="project" value="TreeGrafter"/>
</dbReference>
<dbReference type="GO" id="GO:0043524">
    <property type="term" value="P:negative regulation of neuron apoptotic process"/>
    <property type="evidence" value="ECO:0007669"/>
    <property type="project" value="TreeGrafter"/>
</dbReference>
<dbReference type="GO" id="GO:0021675">
    <property type="term" value="P:nerve development"/>
    <property type="evidence" value="ECO:0007669"/>
    <property type="project" value="TreeGrafter"/>
</dbReference>
<dbReference type="GO" id="GO:0038180">
    <property type="term" value="P:nerve growth factor signaling pathway"/>
    <property type="evidence" value="ECO:0007669"/>
    <property type="project" value="TreeGrafter"/>
</dbReference>
<dbReference type="GO" id="GO:0048812">
    <property type="term" value="P:neuron projection morphogenesis"/>
    <property type="evidence" value="ECO:0007669"/>
    <property type="project" value="TreeGrafter"/>
</dbReference>
<dbReference type="FunFam" id="2.10.90.10:FF:000002">
    <property type="entry name" value="Brain-derived neurotrophic factor"/>
    <property type="match status" value="1"/>
</dbReference>
<dbReference type="Gene3D" id="2.10.90.10">
    <property type="entry name" value="Cystine-knot cytokines"/>
    <property type="match status" value="1"/>
</dbReference>
<dbReference type="InterPro" id="IPR020430">
    <property type="entry name" value="Brain-der_neurotrophic_factor"/>
</dbReference>
<dbReference type="InterPro" id="IPR029034">
    <property type="entry name" value="Cystine-knot_cytokine"/>
</dbReference>
<dbReference type="InterPro" id="IPR020408">
    <property type="entry name" value="Nerve_growth_factor-like"/>
</dbReference>
<dbReference type="InterPro" id="IPR002072">
    <property type="entry name" value="Nerve_growth_factor-rel"/>
</dbReference>
<dbReference type="InterPro" id="IPR019846">
    <property type="entry name" value="Nerve_growth_factor_CS"/>
</dbReference>
<dbReference type="PANTHER" id="PTHR11589:SF3">
    <property type="entry name" value="BRAIN-DERIVED NEUROTROPHIC FACTOR"/>
    <property type="match status" value="1"/>
</dbReference>
<dbReference type="PANTHER" id="PTHR11589">
    <property type="entry name" value="NERVE GROWTH FACTOR NGF -RELATED"/>
    <property type="match status" value="1"/>
</dbReference>
<dbReference type="Pfam" id="PF00243">
    <property type="entry name" value="NGF"/>
    <property type="match status" value="1"/>
</dbReference>
<dbReference type="PIRSF" id="PIRSF001789">
    <property type="entry name" value="NGF"/>
    <property type="match status" value="1"/>
</dbReference>
<dbReference type="PRINTS" id="PR01912">
    <property type="entry name" value="BDNFACTOR"/>
</dbReference>
<dbReference type="PRINTS" id="PR00268">
    <property type="entry name" value="NGF"/>
</dbReference>
<dbReference type="SMART" id="SM00140">
    <property type="entry name" value="NGF"/>
    <property type="match status" value="1"/>
</dbReference>
<dbReference type="SUPFAM" id="SSF57501">
    <property type="entry name" value="Cystine-knot cytokines"/>
    <property type="match status" value="1"/>
</dbReference>
<dbReference type="PROSITE" id="PS00248">
    <property type="entry name" value="NGF_1"/>
    <property type="match status" value="1"/>
</dbReference>
<dbReference type="PROSITE" id="PS50270">
    <property type="entry name" value="NGF_2"/>
    <property type="match status" value="1"/>
</dbReference>
<feature type="signal peptide" evidence="2">
    <location>
        <begin position="1" status="less than"/>
        <end position="5"/>
    </location>
</feature>
<feature type="propeptide" id="PRO_0000346681" evidence="1">
    <location>
        <begin position="6"/>
        <end position="114"/>
    </location>
</feature>
<feature type="chain" id="PRO_0000346682" description="Neurotrophic factor BDNF">
    <location>
        <begin position="115"/>
        <end position="223" status="greater than"/>
    </location>
</feature>
<feature type="glycosylation site" description="N-linked (GlcNAc...) asparagine" evidence="2">
    <location>
        <position position="107"/>
    </location>
</feature>
<feature type="disulfide bond" evidence="1">
    <location>
        <begin position="127"/>
        <end position="194"/>
    </location>
</feature>
<feature type="disulfide bond" evidence="1">
    <location>
        <begin position="172"/>
        <end position="223"/>
    </location>
</feature>
<feature type="non-terminal residue">
    <location>
        <position position="1"/>
    </location>
</feature>
<feature type="non-terminal residue">
    <location>
        <position position="223"/>
    </location>
</feature>
<organism>
    <name type="scientific">Eryx conicus</name>
    <name type="common">Rough-scaled sand boa</name>
    <name type="synonym">Gongylophis conicus</name>
    <dbReference type="NCBI Taxonomy" id="51867"/>
    <lineage>
        <taxon>Eukaryota</taxon>
        <taxon>Metazoa</taxon>
        <taxon>Chordata</taxon>
        <taxon>Craniata</taxon>
        <taxon>Vertebrata</taxon>
        <taxon>Euteleostomi</taxon>
        <taxon>Lepidosauria</taxon>
        <taxon>Squamata</taxon>
        <taxon>Bifurcata</taxon>
        <taxon>Unidentata</taxon>
        <taxon>Episquamata</taxon>
        <taxon>Toxicofera</taxon>
        <taxon>Serpentes</taxon>
        <taxon>Henophidia</taxon>
        <taxon>Boidae</taxon>
        <taxon>Erycinae</taxon>
        <taxon>Eryx</taxon>
    </lineage>
</organism>
<proteinExistence type="inferred from homology"/>
<gene>
    <name type="primary">BDNF</name>
</gene>
<reference key="1">
    <citation type="journal article" date="2006" name="Mol. Phylogenet. Evol.">
        <title>Dispersal and vicariance: the complex evolutionary history of boid snakes.</title>
        <authorList>
            <person name="Noonan B.P."/>
            <person name="Chippindale P.T."/>
        </authorList>
    </citation>
    <scope>NUCLEOTIDE SEQUENCE [GENOMIC DNA]</scope>
</reference>
<accession>Q1X6Z8</accession>
<keyword id="KW-0165">Cleavage on pair of basic residues</keyword>
<keyword id="KW-1015">Disulfide bond</keyword>
<keyword id="KW-0325">Glycoprotein</keyword>
<keyword id="KW-0339">Growth factor</keyword>
<keyword id="KW-0964">Secreted</keyword>
<keyword id="KW-0732">Signal</keyword>
<name>BDNF_ERYCN</name>
<comment type="function">
    <text evidence="1">Promotes the survival of neuronal populations that are all located either in the central nervous system or directly connected to it.</text>
</comment>
<comment type="subcellular location">
    <subcellularLocation>
        <location evidence="1">Secreted</location>
    </subcellularLocation>
</comment>
<comment type="similarity">
    <text evidence="3">Belongs to the NGF-beta family.</text>
</comment>